<sequence>MRSRILAIVFAARHVAALPLAAEDAAATLSLTSSASSTTVLPSPTQYTLPNNDPNQGARNASIARKRELFLYGPSTLGQTTFYPTGELGNNISARDVLLWRQDAANQTATAYREANETFADITSRGGFKTLDDFALLYNGHWKESVPEGISKGMLSNCTSDLLFSMERLSSNPYVLKRLHPTKDKLPFSVESKVVKKLTATTLEALHKGGRLFLVDHSYQKKYTPQPGRYAAACQGLFYLDARSNQFLPLAIKTNVGVDLTYTPLDDKDDWLLAKIMFNNNDLFYSQMYHVLFHTIPEIVHEAAFRTLSDRHPVMGVLNRLMYQAYAIRPVGGAVLFNPGGFWDQNFGLPASAAIDFPGSVYAQGGGGFQAGYLEKDLRSRGLIGEDSGPRLPHFPFYEDAHRLIGAIRRFMQAFVDSTYGADDGDDGALLRDYELQNWIAEANGPAQVRDFPAAPLRRRAQLVDVLTHVAWITGGAHHVMNQGSPVKFSGVLPLHPAALYAPIPTAKGATGNGTRAGLLAWLPNERQAVEQVSLLARFNRAQVGDRKQTVRDAFAAPDLLAGNGPGYAAANARFVEDTGRISREIAGRGFDGKGLSQGMPFVWTALNPAVNPFFLSV</sequence>
<name>MNLOX_GAEAV</name>
<keyword id="KW-0002">3D-structure</keyword>
<keyword id="KW-0223">Dioxygenase</keyword>
<keyword id="KW-0325">Glycoprotein</keyword>
<keyword id="KW-0464">Manganese</keyword>
<keyword id="KW-0479">Metal-binding</keyword>
<keyword id="KW-0560">Oxidoreductase</keyword>
<keyword id="KW-0964">Secreted</keyword>
<keyword id="KW-0732">Signal</keyword>
<proteinExistence type="evidence at protein level"/>
<comment type="function">
    <text evidence="6">Lipoxygenase that metabolizes linoleic and alpha-linolenic acids to 11S- and 13R-hydroperoxy fatty acids. At the end of lipoxygenation, the intermediate product 11S-HPODE from linoleic acid is then transformed into 13R-HPODE as the final product. It also acts on alpha-linolenic acid producing 11S-HPOTrE and 13R-HPOTrE with subsequent transformation of 11S-HPOTrE to 13R-HPOTrE as final product.</text>
</comment>
<comment type="catalytic activity">
    <reaction evidence="6">
        <text>(9Z,12Z)-octadecadienoate + O2 = (11S)-hydroperoxy-(9Z,12Z)-octadecadienoate</text>
        <dbReference type="Rhea" id="RHEA:18993"/>
        <dbReference type="ChEBI" id="CHEBI:15379"/>
        <dbReference type="ChEBI" id="CHEBI:30245"/>
        <dbReference type="ChEBI" id="CHEBI:57467"/>
        <dbReference type="EC" id="1.13.11.45"/>
    </reaction>
</comment>
<comment type="catalytic activity">
    <reaction evidence="6">
        <text>(9Z,12Z)-octadecadienoate + O2 = (13R)-hydroperoxy-(9Z,11E)-octadecadienoate</text>
        <dbReference type="Rhea" id="RHEA:51240"/>
        <dbReference type="ChEBI" id="CHEBI:15379"/>
        <dbReference type="ChEBI" id="CHEBI:30245"/>
        <dbReference type="ChEBI" id="CHEBI:133985"/>
    </reaction>
</comment>
<comment type="catalytic activity">
    <reaction evidence="6">
        <text>(9Z,12Z,15Z)-octadecatrienoate + O2 = (11S)-hydroperoxy-(9Z,12Z,15Z)-octadecatrienoate</text>
        <dbReference type="Rhea" id="RHEA:51440"/>
        <dbReference type="ChEBI" id="CHEBI:15379"/>
        <dbReference type="ChEBI" id="CHEBI:32387"/>
        <dbReference type="ChEBI" id="CHEBI:134110"/>
    </reaction>
</comment>
<comment type="catalytic activity">
    <reaction evidence="6">
        <text>(9Z,12Z,15Z)-octadecatrienoate + O2 = (13R)-hydroperoxy-(9Z,11E,15Z)-octadecatrienoate</text>
        <dbReference type="Rhea" id="RHEA:51244"/>
        <dbReference type="ChEBI" id="CHEBI:15379"/>
        <dbReference type="ChEBI" id="CHEBI:32387"/>
        <dbReference type="ChEBI" id="CHEBI:133987"/>
    </reaction>
</comment>
<comment type="cofactor">
    <cofactor evidence="6 10">
        <name>Mn(2+)</name>
        <dbReference type="ChEBI" id="CHEBI:29035"/>
    </cofactor>
    <text evidence="17">Three His residues, the carboxyl oxygen of the C-terminal Ile or Val residue, and a fifth residue, usually Asn, ligate the metal, which binds water to form a catalytic base Mn(2+)OH(2) for hydrogen abstraction.</text>
</comment>
<comment type="biophysicochemical properties">
    <kinetics>
        <KM evidence="6">7.1 uM for alpha-linoleate</KM>
        <Vmax evidence="6">18.0 nmol/min/ug enzyme for alpha-linoleate</Vmax>
    </kinetics>
</comment>
<comment type="subcellular location">
    <subcellularLocation>
        <location evidence="5 11">Secreted</location>
    </subcellularLocation>
</comment>
<comment type="PTM">
    <text evidence="5 6">N- and O-glycosylated.</text>
</comment>
<comment type="similarity">
    <text evidence="15">Belongs to the lipoxygenase family. Manganese lipoxygenase subfamily.</text>
</comment>
<feature type="signal peptide" evidence="1">
    <location>
        <begin position="1"/>
        <end position="16"/>
    </location>
</feature>
<feature type="chain" id="PRO_0000430459" description="Manganese lipoxygenase">
    <location>
        <begin position="17"/>
        <end position="618"/>
    </location>
</feature>
<feature type="domain" description="Lipoxygenase" evidence="3">
    <location>
        <begin position="47"/>
        <end position="618"/>
    </location>
</feature>
<feature type="region of interest" description="Disordered" evidence="4">
    <location>
        <begin position="36"/>
        <end position="58"/>
    </location>
</feature>
<feature type="compositionally biased region" description="Low complexity" evidence="4">
    <location>
        <begin position="36"/>
        <end position="45"/>
    </location>
</feature>
<feature type="compositionally biased region" description="Polar residues" evidence="4">
    <location>
        <begin position="46"/>
        <end position="58"/>
    </location>
</feature>
<feature type="binding site" evidence="10 16 19">
    <location>
        <position position="290"/>
    </location>
    <ligand>
        <name>Mn(2+)</name>
        <dbReference type="ChEBI" id="CHEBI:29035"/>
        <note>catalytic</note>
    </ligand>
</feature>
<feature type="binding site" evidence="10 16 19">
    <location>
        <position position="294"/>
    </location>
    <ligand>
        <name>Mn(2+)</name>
        <dbReference type="ChEBI" id="CHEBI:29035"/>
        <note>catalytic</note>
    </ligand>
</feature>
<feature type="binding site" evidence="10 16 19">
    <location>
        <position position="478"/>
    </location>
    <ligand>
        <name>Mn(2+)</name>
        <dbReference type="ChEBI" id="CHEBI:29035"/>
        <note>catalytic</note>
    </ligand>
</feature>
<feature type="binding site" evidence="10 19">
    <location>
        <position position="482"/>
    </location>
    <ligand>
        <name>Mn(2+)</name>
        <dbReference type="ChEBI" id="CHEBI:29035"/>
        <note>catalytic</note>
    </ligand>
</feature>
<feature type="binding site" evidence="10 16 19">
    <location>
        <position position="618"/>
    </location>
    <ligand>
        <name>Mn(2+)</name>
        <dbReference type="ChEBI" id="CHEBI:29035"/>
        <note>catalytic</note>
    </ligand>
</feature>
<feature type="glycosylation site" description="N-linked (GlcNAc...) asparagine" evidence="19">
    <location>
        <position position="60"/>
    </location>
</feature>
<feature type="glycosylation site" description="N-linked (GlcNAc...) asparagine" evidence="19">
    <location>
        <position position="91"/>
    </location>
</feature>
<feature type="glycosylation site" description="N-linked (GlcNAc...) asparagine" evidence="19">
    <location>
        <position position="106"/>
    </location>
</feature>
<feature type="glycosylation site" description="N-linked (GlcNAc...) asparagine" evidence="19">
    <location>
        <position position="116"/>
    </location>
</feature>
<feature type="glycosylation site" description="N-linked (GlcNAc...) asparagine" evidence="19">
    <location>
        <position position="157"/>
    </location>
</feature>
<feature type="glycosylation site" description="N-linked (GlcNAc...) asparagine" evidence="2">
    <location>
        <position position="513"/>
    </location>
</feature>
<feature type="mutagenesis site" description="Loses manganese cofactor and abolishes catalytic activity." evidence="6">
    <original>H</original>
    <variation>Q</variation>
    <location>
        <position position="290"/>
    </location>
</feature>
<feature type="mutagenesis site" description="Loses manganese cofactor and abolishes catalytic activity." evidence="6">
    <original>H</original>
    <variation>E</variation>
    <location>
        <position position="294"/>
    </location>
</feature>
<feature type="mutagenesis site" description="Increases the hydroperoxide isomerase activity severalfold and chnages the regiospecificity of the enzyme, slightly shifting the position of oxygenation from the n-6 toward the n-8 and n-10 carbons. May do so by changing the interaction of the hydroperoxides with the catalytic metal." evidence="7 8 9">
    <original>G</original>
    <variation>A</variation>
    <location>
        <position position="332"/>
    </location>
</feature>
<feature type="mutagenesis site" description="Abolishes catalytic activity." evidence="8">
    <original>G</original>
    <variation>V</variation>
    <variation>S</variation>
    <variation>T</variation>
    <location>
        <position position="332"/>
    </location>
</feature>
<feature type="mutagenesis site" description="Increases the hydroperoxide isomerase activity." evidence="9">
    <original>L</original>
    <variation>F</variation>
    <location>
        <position position="336"/>
    </location>
</feature>
<feature type="mutagenesis site" description="Changes the regiospecificity of the enzyme from C-13 toward C-9 with formation of 9S- and 9R-hydroperoxy fatty acids." evidence="9">
    <original>L</original>
    <variation>V</variation>
    <variation>A</variation>
    <variation>G</variation>
    <location>
        <position position="336"/>
    </location>
</feature>
<feature type="mutagenesis site" description="Changes the stereospecificity of the enzyme from 100% 13R- to 69-74% 13S-hydroperoxy fatty acids and increases the oxygenation at C-9, producing mainly the 9S-hydroperoxy stereoisomer from linoleic acid and the 9R-hydroperoxy stereoisomer from alpha-linolenic acid." evidence="9">
    <original>F</original>
    <variation>I</variation>
    <location>
        <position position="337"/>
    </location>
</feature>
<feature type="mutagenesis site" description="Abolishes catalytic activity." evidence="9">
    <original>F</original>
    <variation>V</variation>
    <variation>A</variation>
    <location>
        <position position="337"/>
    </location>
</feature>
<feature type="mutagenesis site" description="Changes the stereospecificity of the enzyme from 13R-HPODE to 13R-, 9S-, and 11-HPODE with almost complete consumption of 11-HPODE to 13R- and 9S-HPOTrE as end products from oxygenation of linoleic acid. Does not affect oxygenation of alpha-linolenic acid." evidence="9">
    <original>F</original>
    <variation>A</variation>
    <location>
        <position position="347"/>
    </location>
</feature>
<feature type="mutagenesis site" description="Changes the stereospecificity of the enzyme from 13R-HPODE to 9S-HPODE as end product from oxygenation of linoleic acid and to 9S- and 13R-HPOTrE from alpha-linolenic acid." evidence="9">
    <original>F</original>
    <variation>L</variation>
    <variation>V</variation>
    <location>
        <position position="347"/>
    </location>
</feature>
<feature type="mutagenesis site" description="Loses manganese cofactor and abolishes catalytic activity." evidence="6">
    <original>H</original>
    <variation>E</variation>
    <location>
        <position position="478"/>
    </location>
</feature>
<feature type="mutagenesis site" description="No effect." evidence="6">
    <original>H</original>
    <variation>Q</variation>
    <location>
        <position position="479"/>
    </location>
</feature>
<feature type="mutagenesis site" description="No effect." evidence="6 8">
    <original>N</original>
    <variation>Q</variation>
    <variation>L</variation>
    <location>
        <position position="482"/>
    </location>
</feature>
<feature type="mutagenesis site" description="No effect." evidence="6">
    <original>Q</original>
    <variation>N</variation>
    <location>
        <position position="483"/>
    </location>
</feature>
<feature type="mutagenesis site" description="No effect." evidence="8">
    <original>S</original>
    <variation>A</variation>
    <location>
        <position position="485"/>
    </location>
</feature>
<feature type="mutagenesis site" description="Loses manganese cofactor and abolishes catalytic activity." evidence="6">
    <location>
        <position position="618"/>
    </location>
</feature>
<feature type="helix" evidence="20">
    <location>
        <begin position="56"/>
        <end position="69"/>
    </location>
</feature>
<feature type="strand" evidence="20">
    <location>
        <begin position="70"/>
        <end position="73"/>
    </location>
</feature>
<feature type="strand" evidence="20">
    <location>
        <begin position="77"/>
        <end position="81"/>
    </location>
</feature>
<feature type="strand" evidence="20">
    <location>
        <begin position="83"/>
        <end position="85"/>
    </location>
</feature>
<feature type="helix" evidence="20">
    <location>
        <begin position="86"/>
        <end position="124"/>
    </location>
</feature>
<feature type="helix" evidence="20">
    <location>
        <begin position="131"/>
        <end position="137"/>
    </location>
</feature>
<feature type="turn" evidence="20">
    <location>
        <begin position="138"/>
        <end position="140"/>
    </location>
</feature>
<feature type="turn" evidence="20">
    <location>
        <begin position="143"/>
        <end position="145"/>
    </location>
</feature>
<feature type="turn" evidence="20">
    <location>
        <begin position="152"/>
        <end position="159"/>
    </location>
</feature>
<feature type="helix" evidence="20">
    <location>
        <begin position="161"/>
        <end position="166"/>
    </location>
</feature>
<feature type="helix" evidence="20">
    <location>
        <begin position="167"/>
        <end position="169"/>
    </location>
</feature>
<feature type="turn" evidence="20">
    <location>
        <begin position="181"/>
        <end position="183"/>
    </location>
</feature>
<feature type="helix" evidence="20">
    <location>
        <begin position="192"/>
        <end position="199"/>
    </location>
</feature>
<feature type="helix" evidence="20">
    <location>
        <begin position="203"/>
        <end position="208"/>
    </location>
</feature>
<feature type="strand" evidence="20">
    <location>
        <begin position="212"/>
        <end position="216"/>
    </location>
</feature>
<feature type="helix" evidence="20">
    <location>
        <begin position="218"/>
        <end position="222"/>
    </location>
</feature>
<feature type="strand" evidence="20">
    <location>
        <begin position="235"/>
        <end position="241"/>
    </location>
</feature>
<feature type="turn" evidence="20">
    <location>
        <begin position="242"/>
        <end position="245"/>
    </location>
</feature>
<feature type="strand" evidence="20">
    <location>
        <begin position="246"/>
        <end position="253"/>
    </location>
</feature>
<feature type="helix" evidence="20">
    <location>
        <begin position="268"/>
        <end position="305"/>
    </location>
</feature>
<feature type="helix" evidence="20">
    <location>
        <begin position="313"/>
        <end position="321"/>
    </location>
</feature>
<feature type="turn" evidence="20">
    <location>
        <begin position="322"/>
        <end position="324"/>
    </location>
</feature>
<feature type="helix" evidence="20">
    <location>
        <begin position="325"/>
        <end position="327"/>
    </location>
</feature>
<feature type="helix" evidence="20">
    <location>
        <begin position="328"/>
        <end position="335"/>
    </location>
</feature>
<feature type="helix" evidence="20">
    <location>
        <begin position="342"/>
        <end position="346"/>
    </location>
</feature>
<feature type="helix" evidence="20">
    <location>
        <begin position="351"/>
        <end position="363"/>
    </location>
</feature>
<feature type="helix" evidence="20">
    <location>
        <begin position="370"/>
        <end position="372"/>
    </location>
</feature>
<feature type="helix" evidence="20">
    <location>
        <begin position="374"/>
        <end position="380"/>
    </location>
</feature>
<feature type="strand" evidence="20">
    <location>
        <begin position="384"/>
        <end position="389"/>
    </location>
</feature>
<feature type="helix" evidence="20">
    <location>
        <begin position="396"/>
        <end position="420"/>
    </location>
</feature>
<feature type="helix" evidence="20">
    <location>
        <begin position="428"/>
        <end position="431"/>
    </location>
</feature>
<feature type="helix" evidence="20">
    <location>
        <begin position="434"/>
        <end position="444"/>
    </location>
</feature>
<feature type="turn" evidence="20">
    <location>
        <begin position="445"/>
        <end position="447"/>
    </location>
</feature>
<feature type="helix" evidence="20">
    <location>
        <begin position="460"/>
        <end position="475"/>
    </location>
</feature>
<feature type="helix" evidence="20">
    <location>
        <begin position="477"/>
        <end position="481"/>
    </location>
</feature>
<feature type="helix" evidence="20">
    <location>
        <begin position="485"/>
        <end position="488"/>
    </location>
</feature>
<feature type="turn" evidence="20">
    <location>
        <begin position="489"/>
        <end position="491"/>
    </location>
</feature>
<feature type="turn" evidence="20">
    <location>
        <begin position="493"/>
        <end position="495"/>
    </location>
</feature>
<feature type="strand" evidence="20">
    <location>
        <begin position="498"/>
        <end position="500"/>
    </location>
</feature>
<feature type="strand" evidence="20">
    <location>
        <begin position="506"/>
        <end position="508"/>
    </location>
</feature>
<feature type="turn" evidence="20">
    <location>
        <begin position="520"/>
        <end position="522"/>
    </location>
</feature>
<feature type="helix" evidence="20">
    <location>
        <begin position="526"/>
        <end position="539"/>
    </location>
</feature>
<feature type="turn" evidence="20">
    <location>
        <begin position="542"/>
        <end position="548"/>
    </location>
</feature>
<feature type="helix" evidence="20">
    <location>
        <begin position="551"/>
        <end position="553"/>
    </location>
</feature>
<feature type="helix" evidence="20">
    <location>
        <begin position="558"/>
        <end position="563"/>
    </location>
</feature>
<feature type="helix" evidence="20">
    <location>
        <begin position="566"/>
        <end position="587"/>
    </location>
</feature>
<feature type="strand" evidence="20">
    <location>
        <begin position="600"/>
        <end position="602"/>
    </location>
</feature>
<feature type="turn" evidence="20">
    <location>
        <begin position="609"/>
        <end position="611"/>
    </location>
</feature>
<feature type="strand" evidence="20">
    <location>
        <begin position="612"/>
        <end position="615"/>
    </location>
</feature>
<dbReference type="EC" id="1.13.11.-" evidence="6"/>
<dbReference type="EC" id="1.13.11.45" evidence="6"/>
<dbReference type="EMBL" id="AY040824">
    <property type="protein sequence ID" value="AAK81882.2"/>
    <property type="molecule type" value="Genomic_DNA"/>
</dbReference>
<dbReference type="PDB" id="5FX8">
    <property type="method" value="X-ray"/>
    <property type="resolution" value="2.60 A"/>
    <property type="chains" value="A/B=1-618"/>
</dbReference>
<dbReference type="PDBsum" id="5FX8"/>
<dbReference type="SMR" id="Q8X151"/>
<dbReference type="SwissLipids" id="SLP:000001656"/>
<dbReference type="KEGG" id="ag:AAK81882"/>
<dbReference type="SABIO-RK" id="Q8X151"/>
<dbReference type="GO" id="GO:0005576">
    <property type="term" value="C:extracellular region"/>
    <property type="evidence" value="ECO:0007669"/>
    <property type="project" value="UniProtKB-SubCell"/>
</dbReference>
<dbReference type="GO" id="GO:0050584">
    <property type="term" value="F:linoleate 11-lipoxygenase activity"/>
    <property type="evidence" value="ECO:0000314"/>
    <property type="project" value="UniProtKB"/>
</dbReference>
<dbReference type="GO" id="GO:0046872">
    <property type="term" value="F:metal ion binding"/>
    <property type="evidence" value="ECO:0007669"/>
    <property type="project" value="UniProtKB-KW"/>
</dbReference>
<dbReference type="GO" id="GO:0043651">
    <property type="term" value="P:linoleic acid metabolic process"/>
    <property type="evidence" value="ECO:0000305"/>
    <property type="project" value="UniProtKB"/>
</dbReference>
<dbReference type="GO" id="GO:0034440">
    <property type="term" value="P:lipid oxidation"/>
    <property type="evidence" value="ECO:0007669"/>
    <property type="project" value="InterPro"/>
</dbReference>
<dbReference type="Gene3D" id="3.10.450.60">
    <property type="match status" value="1"/>
</dbReference>
<dbReference type="Gene3D" id="1.20.245.10">
    <property type="entry name" value="Lipoxygenase-1, Domain 5"/>
    <property type="match status" value="1"/>
</dbReference>
<dbReference type="InterPro" id="IPR000907">
    <property type="entry name" value="LipOase"/>
</dbReference>
<dbReference type="InterPro" id="IPR013819">
    <property type="entry name" value="LipOase_C"/>
</dbReference>
<dbReference type="InterPro" id="IPR036226">
    <property type="entry name" value="LipOase_C_sf"/>
</dbReference>
<dbReference type="PANTHER" id="PTHR11771">
    <property type="entry name" value="LIPOXYGENASE"/>
    <property type="match status" value="1"/>
</dbReference>
<dbReference type="Pfam" id="PF00305">
    <property type="entry name" value="Lipoxygenase"/>
    <property type="match status" value="1"/>
</dbReference>
<dbReference type="SUPFAM" id="SSF48484">
    <property type="entry name" value="Lipoxigenase"/>
    <property type="match status" value="1"/>
</dbReference>
<dbReference type="PROSITE" id="PS51393">
    <property type="entry name" value="LIPOXYGENASE_3"/>
    <property type="match status" value="1"/>
</dbReference>
<protein>
    <recommendedName>
        <fullName evidence="12">Manganese lipoxygenase</fullName>
        <shortName evidence="13">Mn-LO</shortName>
        <shortName evidence="12">MnLOX</shortName>
        <ecNumber evidence="6">1.13.11.-</ecNumber>
        <ecNumber evidence="6">1.13.11.45</ecNumber>
    </recommendedName>
    <alternativeName>
        <fullName evidence="18">Linoleate 11S-lipoxygenase</fullName>
    </alternativeName>
    <alternativeName>
        <fullName evidence="18">Linoleate 13R-lipoxygenase</fullName>
    </alternativeName>
    <alternativeName>
        <fullName evidence="14">Manganese 13R-lipoxygenase</fullName>
        <shortName evidence="14">13R-MnLOX</shortName>
    </alternativeName>
</protein>
<accession>Q8X151</accession>
<organism>
    <name type="scientific">Gaeumannomyces avenae</name>
    <name type="common">Oat take-all root rot fungus</name>
    <name type="synonym">Gaeumannomyces graminis var. avenae</name>
    <dbReference type="NCBI Taxonomy" id="36778"/>
    <lineage>
        <taxon>Eukaryota</taxon>
        <taxon>Fungi</taxon>
        <taxon>Dikarya</taxon>
        <taxon>Ascomycota</taxon>
        <taxon>Pezizomycotina</taxon>
        <taxon>Sordariomycetes</taxon>
        <taxon>Sordariomycetidae</taxon>
        <taxon>Magnaporthales</taxon>
        <taxon>Magnaporthaceae</taxon>
        <taxon>Gaeumannomyces</taxon>
    </lineage>
</organism>
<reference key="1">
    <citation type="journal article" date="2002" name="Eur. J. Biochem.">
        <title>Cloning of the manganese lipoxygenase gene reveals homology with the lipoxygenase gene family.</title>
        <authorList>
            <person name="Hornsten L."/>
            <person name="Su C."/>
            <person name="Osbourn A.E."/>
            <person name="Hellman U."/>
            <person name="Oliw E.H."/>
        </authorList>
    </citation>
    <scope>NUCLEOTIDE SEQUENCE [GENOMIC DNA]</scope>
    <scope>SUBCELLULAR LOCATION</scope>
    <scope>GLYCOSYLATION</scope>
    <source>
        <strain>CBS 870.73</strain>
    </source>
</reference>
<reference key="2">
    <citation type="journal article" date="2012" name="J. Biol. Chem.">
        <title>Catalytic convergence of manganese and iron lipoxygenases by replacement of a single amino acid.</title>
        <authorList>
            <person name="Wennman A."/>
            <person name="Jerneren F."/>
            <person name="Hamberg M."/>
            <person name="Oliw E.H."/>
        </authorList>
    </citation>
    <scope>SEQUENCE REVISION TO 52 AND 158</scope>
    <scope>MUTAGENESIS OF GLY-332; LEU-336 AND PHE-337</scope>
</reference>
<reference key="3">
    <citation type="journal article" date="1998" name="J. Biol. Chem.">
        <title>Manganese lipoxygenase. Purification and characterization.</title>
        <authorList>
            <person name="Su C."/>
            <person name="Oliw E.H."/>
        </authorList>
    </citation>
    <scope>SUBCELLULAR LOCATION</scope>
</reference>
<reference key="4">
    <citation type="journal article" date="2005" name="Arch. Biochem. Biophys.">
        <title>Expression of manganese lipoxygenase in Pichia pastoris and site-directed mutagenesis of putative metal ligands.</title>
        <authorList>
            <person name="Cristea M."/>
            <person name="Engstroem K."/>
            <person name="Su C."/>
            <person name="Hoernsten L."/>
            <person name="Oliw E.H."/>
        </authorList>
    </citation>
    <scope>FUNCTION</scope>
    <scope>CATALYTIC ACTIVITY</scope>
    <scope>BIOPHYSICOCHEMICAL PROPERTIES</scope>
    <scope>COFACTOR</scope>
    <scope>MUTAGENESIS OF HIS-290; HIS-294; HIS-478; HIS-479; ASN-482; GLN-483 AND VAL-618</scope>
    <scope>GLYCOSYLATION</scope>
</reference>
<reference key="5">
    <citation type="journal article" date="2006" name="J. Biol. Chem.">
        <title>A G316A mutation of manganese lipoxygenase augments hydroperoxide isomerase activity: mechanism of biosynthesis of epoxyalcohols.</title>
        <authorList>
            <person name="Cristea M."/>
            <person name="Oliw E.H."/>
        </authorList>
    </citation>
    <scope>MUTAGENESIS OF GLY-332</scope>
</reference>
<reference key="6">
    <citation type="journal article" date="2008" name="J. Lipid Res.">
        <title>Factors influencing the rearrangement of bis-allylic hydroperoxides by manganese lipoxygenase.</title>
        <authorList>
            <person name="Oliw E.H."/>
        </authorList>
    </citation>
    <scope>MUTAGENESIS OF GLY-332; ASN-482 AND SER-485</scope>
</reference>
<reference key="7">
    <citation type="journal article" date="2013" name="J. Lipid Res.">
        <title>Secretion of two novel enzymes, manganese 9S-lipoxygenase and epoxy alcohol synthase, by the rice pathogen Magnaporthe salvinii.</title>
        <authorList>
            <person name="Wennman A."/>
            <person name="Oliw E.H."/>
        </authorList>
    </citation>
    <scope>MUTAGENESIS OF PHE-347</scope>
</reference>
<reference key="8">
    <citation type="journal article" date="2016" name="J. Lipid Res.">
        <title>Crystal structure of linoleate 13R-manganese lipoxygenase in complex with an adhesion protein.</title>
        <authorList>
            <person name="Chen Y."/>
            <person name="Wennman A."/>
            <person name="Karkehabadi S."/>
            <person name="Engstroem A."/>
            <person name="Oliw E.H."/>
        </authorList>
    </citation>
    <scope>X-RAY CRYSTALLOGRAPHY (2.60 ANGSTROMS) IN COMPLEX WITH MANGANESE</scope>
    <scope>GLYCOSYLATION AT ASN-60; ASN-91; ASN-106; ASN-116 AND ASN-157</scope>
</reference>
<evidence type="ECO:0000250" key="1">
    <source>
        <dbReference type="UniProtKB" id="Q8X150"/>
    </source>
</evidence>
<evidence type="ECO:0000255" key="2">
    <source>
        <dbReference type="PROSITE-ProRule" id="PRU00498"/>
    </source>
</evidence>
<evidence type="ECO:0000255" key="3">
    <source>
        <dbReference type="PROSITE-ProRule" id="PRU00726"/>
    </source>
</evidence>
<evidence type="ECO:0000256" key="4">
    <source>
        <dbReference type="SAM" id="MobiDB-lite"/>
    </source>
</evidence>
<evidence type="ECO:0000269" key="5">
    <source>
    </source>
</evidence>
<evidence type="ECO:0000269" key="6">
    <source>
    </source>
</evidence>
<evidence type="ECO:0000269" key="7">
    <source>
    </source>
</evidence>
<evidence type="ECO:0000269" key="8">
    <source>
    </source>
</evidence>
<evidence type="ECO:0000269" key="9">
    <source>
    </source>
</evidence>
<evidence type="ECO:0000269" key="10">
    <source>
    </source>
</evidence>
<evidence type="ECO:0000269" key="11">
    <source>
    </source>
</evidence>
<evidence type="ECO:0000303" key="12">
    <source>
    </source>
</evidence>
<evidence type="ECO:0000303" key="13">
    <source>
    </source>
</evidence>
<evidence type="ECO:0000303" key="14">
    <source>
    </source>
</evidence>
<evidence type="ECO:0000305" key="15"/>
<evidence type="ECO:0000305" key="16">
    <source>
    </source>
</evidence>
<evidence type="ECO:0000305" key="17">
    <source>
    </source>
</evidence>
<evidence type="ECO:0000305" key="18">
    <source>
    </source>
</evidence>
<evidence type="ECO:0007744" key="19">
    <source>
        <dbReference type="PDB" id="5FX8"/>
    </source>
</evidence>
<evidence type="ECO:0007829" key="20">
    <source>
        <dbReference type="PDB" id="5FX8"/>
    </source>
</evidence>